<gene>
    <name evidence="1" type="primary">rplA</name>
    <name type="ordered locus">Bd2990</name>
</gene>
<evidence type="ECO:0000255" key="1">
    <source>
        <dbReference type="HAMAP-Rule" id="MF_01318"/>
    </source>
</evidence>
<evidence type="ECO:0000305" key="2"/>
<reference key="1">
    <citation type="journal article" date="2004" name="Science">
        <title>A predator unmasked: life cycle of Bdellovibrio bacteriovorus from a genomic perspective.</title>
        <authorList>
            <person name="Rendulic S."/>
            <person name="Jagtap P."/>
            <person name="Rosinus A."/>
            <person name="Eppinger M."/>
            <person name="Baar C."/>
            <person name="Lanz C."/>
            <person name="Keller H."/>
            <person name="Lambert C."/>
            <person name="Evans K.J."/>
            <person name="Goesmann A."/>
            <person name="Meyer F."/>
            <person name="Sockett R.E."/>
            <person name="Schuster S.C."/>
        </authorList>
    </citation>
    <scope>NUCLEOTIDE SEQUENCE [LARGE SCALE GENOMIC DNA]</scope>
    <source>
        <strain>ATCC 15356 / DSM 50701 / NCIMB 9529 / HD100</strain>
    </source>
</reference>
<keyword id="KW-1185">Reference proteome</keyword>
<keyword id="KW-0678">Repressor</keyword>
<keyword id="KW-0687">Ribonucleoprotein</keyword>
<keyword id="KW-0689">Ribosomal protein</keyword>
<keyword id="KW-0694">RNA-binding</keyword>
<keyword id="KW-0699">rRNA-binding</keyword>
<keyword id="KW-0810">Translation regulation</keyword>
<keyword id="KW-0820">tRNA-binding</keyword>
<sequence>MAGKKFAAVAKKVDSAKKYTVEEAFKLVVETAPAKFDESIDVALRLGIDPKQSDQQVRGAIALPHGLGKEVKVVVFAKGPKEAEAKAAGADFVGADDLVAKIQGGWLDFDKCIATPDMMATVSKVAKILGPRGLMPNPKIGTVTMNVGEAVTAEKKGKLDFRVDKAGIVHAGIGKKSMGDAKLKDNFMTLLGAIVKAKPASSKGIYLRSIAVASTMGPGVKIEPNAAAAATGAN</sequence>
<accession>Q6MJ04</accession>
<proteinExistence type="inferred from homology"/>
<protein>
    <recommendedName>
        <fullName evidence="1">Large ribosomal subunit protein uL1</fullName>
    </recommendedName>
    <alternativeName>
        <fullName evidence="2">50S ribosomal protein L1</fullName>
    </alternativeName>
</protein>
<feature type="chain" id="PRO_0000125620" description="Large ribosomal subunit protein uL1">
    <location>
        <begin position="1"/>
        <end position="234"/>
    </location>
</feature>
<dbReference type="EMBL" id="BX842654">
    <property type="protein sequence ID" value="CAE80759.1"/>
    <property type="molecule type" value="Genomic_DNA"/>
</dbReference>
<dbReference type="RefSeq" id="WP_011165363.1">
    <property type="nucleotide sequence ID" value="NC_005363.1"/>
</dbReference>
<dbReference type="SMR" id="Q6MJ04"/>
<dbReference type="STRING" id="264462.Bd2990"/>
<dbReference type="GeneID" id="93013849"/>
<dbReference type="KEGG" id="bba:Bd2990"/>
<dbReference type="eggNOG" id="COG0081">
    <property type="taxonomic scope" value="Bacteria"/>
</dbReference>
<dbReference type="HOGENOM" id="CLU_062853_0_0_7"/>
<dbReference type="Proteomes" id="UP000008080">
    <property type="component" value="Chromosome"/>
</dbReference>
<dbReference type="GO" id="GO:0022625">
    <property type="term" value="C:cytosolic large ribosomal subunit"/>
    <property type="evidence" value="ECO:0007669"/>
    <property type="project" value="TreeGrafter"/>
</dbReference>
<dbReference type="GO" id="GO:0019843">
    <property type="term" value="F:rRNA binding"/>
    <property type="evidence" value="ECO:0007669"/>
    <property type="project" value="UniProtKB-UniRule"/>
</dbReference>
<dbReference type="GO" id="GO:0003735">
    <property type="term" value="F:structural constituent of ribosome"/>
    <property type="evidence" value="ECO:0007669"/>
    <property type="project" value="InterPro"/>
</dbReference>
<dbReference type="GO" id="GO:0000049">
    <property type="term" value="F:tRNA binding"/>
    <property type="evidence" value="ECO:0007669"/>
    <property type="project" value="UniProtKB-KW"/>
</dbReference>
<dbReference type="GO" id="GO:0006417">
    <property type="term" value="P:regulation of translation"/>
    <property type="evidence" value="ECO:0007669"/>
    <property type="project" value="UniProtKB-KW"/>
</dbReference>
<dbReference type="GO" id="GO:0006412">
    <property type="term" value="P:translation"/>
    <property type="evidence" value="ECO:0007669"/>
    <property type="project" value="UniProtKB-UniRule"/>
</dbReference>
<dbReference type="CDD" id="cd00403">
    <property type="entry name" value="Ribosomal_L1"/>
    <property type="match status" value="1"/>
</dbReference>
<dbReference type="FunFam" id="3.40.50.790:FF:000001">
    <property type="entry name" value="50S ribosomal protein L1"/>
    <property type="match status" value="1"/>
</dbReference>
<dbReference type="Gene3D" id="3.30.190.20">
    <property type="match status" value="1"/>
</dbReference>
<dbReference type="Gene3D" id="3.40.50.790">
    <property type="match status" value="1"/>
</dbReference>
<dbReference type="HAMAP" id="MF_01318_B">
    <property type="entry name" value="Ribosomal_uL1_B"/>
    <property type="match status" value="1"/>
</dbReference>
<dbReference type="InterPro" id="IPR005878">
    <property type="entry name" value="Ribosom_uL1_bac-type"/>
</dbReference>
<dbReference type="InterPro" id="IPR002143">
    <property type="entry name" value="Ribosomal_uL1"/>
</dbReference>
<dbReference type="InterPro" id="IPR023674">
    <property type="entry name" value="Ribosomal_uL1-like"/>
</dbReference>
<dbReference type="InterPro" id="IPR028364">
    <property type="entry name" value="Ribosomal_uL1/biogenesis"/>
</dbReference>
<dbReference type="InterPro" id="IPR016095">
    <property type="entry name" value="Ribosomal_uL1_3-a/b-sand"/>
</dbReference>
<dbReference type="InterPro" id="IPR023673">
    <property type="entry name" value="Ribosomal_uL1_CS"/>
</dbReference>
<dbReference type="NCBIfam" id="TIGR01169">
    <property type="entry name" value="rplA_bact"/>
    <property type="match status" value="1"/>
</dbReference>
<dbReference type="PANTHER" id="PTHR36427">
    <property type="entry name" value="54S RIBOSOMAL PROTEIN L1, MITOCHONDRIAL"/>
    <property type="match status" value="1"/>
</dbReference>
<dbReference type="PANTHER" id="PTHR36427:SF3">
    <property type="entry name" value="LARGE RIBOSOMAL SUBUNIT PROTEIN UL1M"/>
    <property type="match status" value="1"/>
</dbReference>
<dbReference type="Pfam" id="PF00687">
    <property type="entry name" value="Ribosomal_L1"/>
    <property type="match status" value="1"/>
</dbReference>
<dbReference type="PIRSF" id="PIRSF002155">
    <property type="entry name" value="Ribosomal_L1"/>
    <property type="match status" value="1"/>
</dbReference>
<dbReference type="SUPFAM" id="SSF56808">
    <property type="entry name" value="Ribosomal protein L1"/>
    <property type="match status" value="1"/>
</dbReference>
<dbReference type="PROSITE" id="PS01199">
    <property type="entry name" value="RIBOSOMAL_L1"/>
    <property type="match status" value="1"/>
</dbReference>
<comment type="function">
    <text evidence="1">Binds directly to 23S rRNA. The L1 stalk is quite mobile in the ribosome, and is involved in E site tRNA release.</text>
</comment>
<comment type="function">
    <text evidence="1">Protein L1 is also a translational repressor protein, it controls the translation of the L11 operon by binding to its mRNA.</text>
</comment>
<comment type="subunit">
    <text evidence="1">Part of the 50S ribosomal subunit.</text>
</comment>
<comment type="similarity">
    <text evidence="1">Belongs to the universal ribosomal protein uL1 family.</text>
</comment>
<organism>
    <name type="scientific">Bdellovibrio bacteriovorus (strain ATCC 15356 / DSM 50701 / NCIMB 9529 / HD100)</name>
    <dbReference type="NCBI Taxonomy" id="264462"/>
    <lineage>
        <taxon>Bacteria</taxon>
        <taxon>Pseudomonadati</taxon>
        <taxon>Bdellovibrionota</taxon>
        <taxon>Bdellovibrionia</taxon>
        <taxon>Bdellovibrionales</taxon>
        <taxon>Pseudobdellovibrionaceae</taxon>
        <taxon>Bdellovibrio</taxon>
    </lineage>
</organism>
<name>RL1_BDEBA</name>